<comment type="cofactor">
    <cofactor evidence="1">
        <name>Zn(2+)</name>
        <dbReference type="ChEBI" id="CHEBI:29105"/>
    </cofactor>
    <text evidence="1">Binds 1 zinc ion.</text>
</comment>
<comment type="subcellular location">
    <subcellularLocation>
        <location evidence="1">Cytoplasm</location>
    </subcellularLocation>
</comment>
<comment type="similarity">
    <text evidence="1">Belongs to the SprT family.</text>
</comment>
<organism>
    <name type="scientific">Actinobacillus succinogenes (strain ATCC 55618 / DSM 22257 / CCUG 43843 / 130Z)</name>
    <dbReference type="NCBI Taxonomy" id="339671"/>
    <lineage>
        <taxon>Bacteria</taxon>
        <taxon>Pseudomonadati</taxon>
        <taxon>Pseudomonadota</taxon>
        <taxon>Gammaproteobacteria</taxon>
        <taxon>Pasteurellales</taxon>
        <taxon>Pasteurellaceae</taxon>
        <taxon>Actinobacillus</taxon>
    </lineage>
</organism>
<dbReference type="EMBL" id="CP000746">
    <property type="protein sequence ID" value="ABR74207.1"/>
    <property type="molecule type" value="Genomic_DNA"/>
</dbReference>
<dbReference type="RefSeq" id="WP_012072585.1">
    <property type="nucleotide sequence ID" value="NC_009655.1"/>
</dbReference>
<dbReference type="STRING" id="339671.Asuc_0837"/>
<dbReference type="KEGG" id="asu:Asuc_0837"/>
<dbReference type="eggNOG" id="COG3091">
    <property type="taxonomic scope" value="Bacteria"/>
</dbReference>
<dbReference type="HOGENOM" id="CLU_113336_0_1_6"/>
<dbReference type="OrthoDB" id="267364at2"/>
<dbReference type="Proteomes" id="UP000001114">
    <property type="component" value="Chromosome"/>
</dbReference>
<dbReference type="GO" id="GO:0005737">
    <property type="term" value="C:cytoplasm"/>
    <property type="evidence" value="ECO:0007669"/>
    <property type="project" value="UniProtKB-SubCell"/>
</dbReference>
<dbReference type="GO" id="GO:0008270">
    <property type="term" value="F:zinc ion binding"/>
    <property type="evidence" value="ECO:0007669"/>
    <property type="project" value="UniProtKB-UniRule"/>
</dbReference>
<dbReference type="GO" id="GO:0006950">
    <property type="term" value="P:response to stress"/>
    <property type="evidence" value="ECO:0007669"/>
    <property type="project" value="UniProtKB-ARBA"/>
</dbReference>
<dbReference type="Gene3D" id="3.30.2010.10">
    <property type="entry name" value="Metalloproteases ('zincins'), catalytic domain"/>
    <property type="match status" value="1"/>
</dbReference>
<dbReference type="HAMAP" id="MF_00746">
    <property type="entry name" value="SprT"/>
    <property type="match status" value="1"/>
</dbReference>
<dbReference type="InterPro" id="IPR006640">
    <property type="entry name" value="SprT-like_domain"/>
</dbReference>
<dbReference type="InterPro" id="IPR035240">
    <property type="entry name" value="SprT_Zn_ribbon"/>
</dbReference>
<dbReference type="InterPro" id="IPR023483">
    <property type="entry name" value="Uncharacterised_SprT"/>
</dbReference>
<dbReference type="NCBIfam" id="NF003421">
    <property type="entry name" value="PRK04860.1"/>
    <property type="match status" value="1"/>
</dbReference>
<dbReference type="PANTHER" id="PTHR38773">
    <property type="entry name" value="PROTEIN SPRT"/>
    <property type="match status" value="1"/>
</dbReference>
<dbReference type="PANTHER" id="PTHR38773:SF1">
    <property type="entry name" value="PROTEIN SPRT"/>
    <property type="match status" value="1"/>
</dbReference>
<dbReference type="Pfam" id="PF10263">
    <property type="entry name" value="SprT-like"/>
    <property type="match status" value="1"/>
</dbReference>
<dbReference type="Pfam" id="PF17283">
    <property type="entry name" value="Zn_ribbon_SprT"/>
    <property type="match status" value="1"/>
</dbReference>
<dbReference type="SMART" id="SM00731">
    <property type="entry name" value="SprT"/>
    <property type="match status" value="1"/>
</dbReference>
<dbReference type="PROSITE" id="PS00142">
    <property type="entry name" value="ZINC_PROTEASE"/>
    <property type="match status" value="1"/>
</dbReference>
<protein>
    <recommendedName>
        <fullName evidence="1">Protein SprT</fullName>
    </recommendedName>
</protein>
<keyword id="KW-0963">Cytoplasm</keyword>
<keyword id="KW-0479">Metal-binding</keyword>
<keyword id="KW-1185">Reference proteome</keyword>
<keyword id="KW-0862">Zinc</keyword>
<gene>
    <name evidence="1" type="primary">sprT</name>
    <name type="ordered locus">Asuc_0837</name>
</gene>
<evidence type="ECO:0000255" key="1">
    <source>
        <dbReference type="HAMAP-Rule" id="MF_00746"/>
    </source>
</evidence>
<proteinExistence type="inferred from homology"/>
<reference key="1">
    <citation type="journal article" date="2010" name="BMC Genomics">
        <title>A genomic perspective on the potential of Actinobacillus succinogenes for industrial succinate production.</title>
        <authorList>
            <person name="McKinlay J.B."/>
            <person name="Laivenieks M."/>
            <person name="Schindler B.D."/>
            <person name="McKinlay A.A."/>
            <person name="Siddaramappa S."/>
            <person name="Challacombe J.F."/>
            <person name="Lowry S.R."/>
            <person name="Clum A."/>
            <person name="Lapidus A.L."/>
            <person name="Burkhart K.B."/>
            <person name="Harkins V."/>
            <person name="Vieille C."/>
        </authorList>
    </citation>
    <scope>NUCLEOTIDE SEQUENCE [LARGE SCALE GENOMIC DNA]</scope>
    <source>
        <strain>ATCC 55618 / DSM 22257 / CCUG 43843 / 130Z</strain>
    </source>
</reference>
<accession>A6VML0</accession>
<feature type="chain" id="PRO_1000072821" description="Protein SprT">
    <location>
        <begin position="1"/>
        <end position="170"/>
    </location>
</feature>
<feature type="domain" description="SprT-like" evidence="1">
    <location>
        <begin position="25"/>
        <end position="165"/>
    </location>
</feature>
<feature type="active site" evidence="1">
    <location>
        <position position="79"/>
    </location>
</feature>
<feature type="binding site" evidence="1">
    <location>
        <position position="78"/>
    </location>
    <ligand>
        <name>Zn(2+)</name>
        <dbReference type="ChEBI" id="CHEBI:29105"/>
    </ligand>
</feature>
<feature type="binding site" evidence="1">
    <location>
        <position position="82"/>
    </location>
    <ligand>
        <name>Zn(2+)</name>
        <dbReference type="ChEBI" id="CHEBI:29105"/>
    </ligand>
</feature>
<sequence length="170" mass="20023">MEQQTRFRHLKMQIQRKLNACLQKSEQFFDRTFAVPTVSYEVRGIKAGVAYLQKNAIKFNRTLLLENPSEFVNQVVPHELAHLIVYQLFGRVKPHGKEWQAVMTNVFQLPAETYHQFDVKSVQGKTFAYRCGCRIHQLSVRRHNKIQRERAVYLCQYCKGRLEPVNKICP</sequence>
<name>SPRT_ACTSZ</name>